<proteinExistence type="inferred from homology"/>
<protein>
    <recommendedName>
        <fullName evidence="1">3-deoxy-D-manno-octulosonic acid kinase</fullName>
        <shortName evidence="1">Kdo kinase</shortName>
        <ecNumber evidence="1">2.7.1.166</ecNumber>
    </recommendedName>
</protein>
<comment type="function">
    <text evidence="1">Catalyzes the ATP-dependent phosphorylation of the 3-deoxy-D-manno-octulosonic acid (Kdo) residue in Kdo-lipid IV(A) at the 4-OH position.</text>
</comment>
<comment type="catalytic activity">
    <reaction evidence="1">
        <text>an alpha-Kdo-(2-&gt;6)-lipid IVA + ATP = a 4-O-phospho-alpha-Kdo-(2-&gt;6)-lipid IVA + ADP + H(+)</text>
        <dbReference type="Rhea" id="RHEA:74271"/>
        <dbReference type="ChEBI" id="CHEBI:15378"/>
        <dbReference type="ChEBI" id="CHEBI:30616"/>
        <dbReference type="ChEBI" id="CHEBI:176428"/>
        <dbReference type="ChEBI" id="CHEBI:193140"/>
        <dbReference type="ChEBI" id="CHEBI:456216"/>
        <dbReference type="EC" id="2.7.1.166"/>
    </reaction>
</comment>
<comment type="pathway">
    <text evidence="1">Bacterial outer membrane biogenesis; LPS core biosynthesis.</text>
</comment>
<comment type="subcellular location">
    <subcellularLocation>
        <location evidence="1">Cell inner membrane</location>
        <topology evidence="1">Peripheral membrane protein</topology>
        <orientation evidence="1">Cytoplasmic side</orientation>
    </subcellularLocation>
</comment>
<comment type="similarity">
    <text evidence="1">Belongs to the protein kinase superfamily. KdkA/RfaP family.</text>
</comment>
<sequence>MVSFDATEALAPYREGRGYGAIVFDRERLRQADASLFSPQSWGDRARPVDKGGRGGAWFVDAPFGRSVLRQYLRGGMAARVSRDRYLWKGAGRTRSFAEFRLMRELIKRKLPVPRPLAACYLREGLGYRAALLMERLENVRSLADHAQLAGRGAPWEATGQLIARFHRAGLDHPDLNAHNILFDAGGHGWLIDFDRGVLRIPATRWRERNLKRLHRSLLKLRGNRSGEDVDKDYERLHRAYELAWGRGY</sequence>
<feature type="chain" id="PRO_1000127646" description="3-deoxy-D-manno-octulosonic acid kinase">
    <location>
        <begin position="1"/>
        <end position="249"/>
    </location>
</feature>
<feature type="active site" evidence="1">
    <location>
        <position position="175"/>
    </location>
</feature>
<reference key="1">
    <citation type="journal article" date="2008" name="BMC Genomics">
        <title>Genome sequence and rapid evolution of the rice pathogen Xanthomonas oryzae pv. oryzae PXO99A.</title>
        <authorList>
            <person name="Salzberg S.L."/>
            <person name="Sommer D.D."/>
            <person name="Schatz M.C."/>
            <person name="Phillippy A.M."/>
            <person name="Rabinowicz P.D."/>
            <person name="Tsuge S."/>
            <person name="Furutani A."/>
            <person name="Ochiai H."/>
            <person name="Delcher A.L."/>
            <person name="Kelley D."/>
            <person name="Madupu R."/>
            <person name="Puiu D."/>
            <person name="Radune D."/>
            <person name="Shumway M."/>
            <person name="Trapnell C."/>
            <person name="Aparna G."/>
            <person name="Jha G."/>
            <person name="Pandey A."/>
            <person name="Patil P.B."/>
            <person name="Ishihara H."/>
            <person name="Meyer D.F."/>
            <person name="Szurek B."/>
            <person name="Verdier V."/>
            <person name="Koebnik R."/>
            <person name="Dow J.M."/>
            <person name="Ryan R.P."/>
            <person name="Hirata H."/>
            <person name="Tsuyumu S."/>
            <person name="Won Lee S."/>
            <person name="Seo Y.-S."/>
            <person name="Sriariyanum M."/>
            <person name="Ronald P.C."/>
            <person name="Sonti R.V."/>
            <person name="Van Sluys M.-A."/>
            <person name="Leach J.E."/>
            <person name="White F.F."/>
            <person name="Bogdanove A.J."/>
        </authorList>
    </citation>
    <scope>NUCLEOTIDE SEQUENCE [LARGE SCALE GENOMIC DNA]</scope>
    <source>
        <strain>PXO99A</strain>
    </source>
</reference>
<keyword id="KW-0067">ATP-binding</keyword>
<keyword id="KW-0997">Cell inner membrane</keyword>
<keyword id="KW-1003">Cell membrane</keyword>
<keyword id="KW-0418">Kinase</keyword>
<keyword id="KW-0448">Lipopolysaccharide biosynthesis</keyword>
<keyword id="KW-0472">Membrane</keyword>
<keyword id="KW-0547">Nucleotide-binding</keyword>
<keyword id="KW-0808">Transferase</keyword>
<gene>
    <name evidence="1" type="primary">kdkA</name>
    <name type="ordered locus">PXO_02451</name>
</gene>
<evidence type="ECO:0000255" key="1">
    <source>
        <dbReference type="HAMAP-Rule" id="MF_00521"/>
    </source>
</evidence>
<name>KDKA_XANOP</name>
<organism>
    <name type="scientific">Xanthomonas oryzae pv. oryzae (strain PXO99A)</name>
    <dbReference type="NCBI Taxonomy" id="360094"/>
    <lineage>
        <taxon>Bacteria</taxon>
        <taxon>Pseudomonadati</taxon>
        <taxon>Pseudomonadota</taxon>
        <taxon>Gammaproteobacteria</taxon>
        <taxon>Lysobacterales</taxon>
        <taxon>Lysobacteraceae</taxon>
        <taxon>Xanthomonas</taxon>
    </lineage>
</organism>
<dbReference type="EC" id="2.7.1.166" evidence="1"/>
<dbReference type="EMBL" id="CP000967">
    <property type="protein sequence ID" value="ACD60740.1"/>
    <property type="molecule type" value="Genomic_DNA"/>
</dbReference>
<dbReference type="RefSeq" id="WP_011257904.1">
    <property type="nucleotide sequence ID" value="NC_010717.2"/>
</dbReference>
<dbReference type="SMR" id="B2SLU1"/>
<dbReference type="KEGG" id="xop:PXO_02451"/>
<dbReference type="eggNOG" id="COG3642">
    <property type="taxonomic scope" value="Bacteria"/>
</dbReference>
<dbReference type="HOGENOM" id="CLU_094226_0_0_6"/>
<dbReference type="UniPathway" id="UPA00958"/>
<dbReference type="Proteomes" id="UP000001740">
    <property type="component" value="Chromosome"/>
</dbReference>
<dbReference type="GO" id="GO:0005886">
    <property type="term" value="C:plasma membrane"/>
    <property type="evidence" value="ECO:0007669"/>
    <property type="project" value="UniProtKB-SubCell"/>
</dbReference>
<dbReference type="GO" id="GO:0005524">
    <property type="term" value="F:ATP binding"/>
    <property type="evidence" value="ECO:0007669"/>
    <property type="project" value="UniProtKB-UniRule"/>
</dbReference>
<dbReference type="GO" id="GO:0016301">
    <property type="term" value="F:kinase activity"/>
    <property type="evidence" value="ECO:0007669"/>
    <property type="project" value="UniProtKB-KW"/>
</dbReference>
<dbReference type="GO" id="GO:0016773">
    <property type="term" value="F:phosphotransferase activity, alcohol group as acceptor"/>
    <property type="evidence" value="ECO:0007669"/>
    <property type="project" value="UniProtKB-UniRule"/>
</dbReference>
<dbReference type="GO" id="GO:0009244">
    <property type="term" value="P:lipopolysaccharide core region biosynthetic process"/>
    <property type="evidence" value="ECO:0007669"/>
    <property type="project" value="UniProtKB-UniRule"/>
</dbReference>
<dbReference type="Gene3D" id="1.10.510.10">
    <property type="entry name" value="Transferase(Phosphotransferase) domain 1"/>
    <property type="match status" value="1"/>
</dbReference>
<dbReference type="HAMAP" id="MF_00521">
    <property type="entry name" value="KDO_kinase"/>
    <property type="match status" value="1"/>
</dbReference>
<dbReference type="InterPro" id="IPR022826">
    <property type="entry name" value="KDO_kinase"/>
</dbReference>
<dbReference type="InterPro" id="IPR011009">
    <property type="entry name" value="Kinase-like_dom_sf"/>
</dbReference>
<dbReference type="NCBIfam" id="NF002475">
    <property type="entry name" value="PRK01723.1"/>
    <property type="match status" value="1"/>
</dbReference>
<dbReference type="Pfam" id="PF06293">
    <property type="entry name" value="Kdo"/>
    <property type="match status" value="1"/>
</dbReference>
<dbReference type="SUPFAM" id="SSF56112">
    <property type="entry name" value="Protein kinase-like (PK-like)"/>
    <property type="match status" value="1"/>
</dbReference>
<accession>B2SLU1</accession>